<evidence type="ECO:0000250" key="1">
    <source>
        <dbReference type="UniProtKB" id="Q8WUJ0"/>
    </source>
</evidence>
<evidence type="ECO:0000255" key="2">
    <source>
        <dbReference type="PROSITE-ProRule" id="PRU00160"/>
    </source>
</evidence>
<evidence type="ECO:0000305" key="3"/>
<accession>Q4V7N3</accession>
<organism>
    <name type="scientific">Xenopus laevis</name>
    <name type="common">African clawed frog</name>
    <dbReference type="NCBI Taxonomy" id="8355"/>
    <lineage>
        <taxon>Eukaryota</taxon>
        <taxon>Metazoa</taxon>
        <taxon>Chordata</taxon>
        <taxon>Craniata</taxon>
        <taxon>Vertebrata</taxon>
        <taxon>Euteleostomi</taxon>
        <taxon>Amphibia</taxon>
        <taxon>Batrachia</taxon>
        <taxon>Anura</taxon>
        <taxon>Pipoidea</taxon>
        <taxon>Pipidae</taxon>
        <taxon>Xenopodinae</taxon>
        <taxon>Xenopus</taxon>
        <taxon>Xenopus</taxon>
    </lineage>
</organism>
<proteinExistence type="evidence at transcript level"/>
<dbReference type="EMBL" id="BC097811">
    <property type="protein sequence ID" value="AAH97811.1"/>
    <property type="molecule type" value="mRNA"/>
</dbReference>
<dbReference type="RefSeq" id="NP_001089533.1">
    <property type="nucleotide sequence ID" value="NM_001096064.1"/>
</dbReference>
<dbReference type="SMR" id="Q4V7N3"/>
<dbReference type="DNASU" id="734588"/>
<dbReference type="GeneID" id="734588"/>
<dbReference type="KEGG" id="xla:734588"/>
<dbReference type="AGR" id="Xenbase:XB-GENE-967350"/>
<dbReference type="CTD" id="734588"/>
<dbReference type="Xenbase" id="XB-GENE-967350">
    <property type="gene designation" value="styx.L"/>
</dbReference>
<dbReference type="OrthoDB" id="426001at2759"/>
<dbReference type="Proteomes" id="UP000186698">
    <property type="component" value="Chromosome 8L"/>
</dbReference>
<dbReference type="Bgee" id="734588">
    <property type="expression patterns" value="Expressed in egg cell and 19 other cell types or tissues"/>
</dbReference>
<dbReference type="GO" id="GO:0005737">
    <property type="term" value="C:cytoplasm"/>
    <property type="evidence" value="ECO:0000318"/>
    <property type="project" value="GO_Central"/>
</dbReference>
<dbReference type="GO" id="GO:0005654">
    <property type="term" value="C:nucleoplasm"/>
    <property type="evidence" value="ECO:0000318"/>
    <property type="project" value="GO_Central"/>
</dbReference>
<dbReference type="GO" id="GO:1990444">
    <property type="term" value="F:F-box domain binding"/>
    <property type="evidence" value="ECO:0007669"/>
    <property type="project" value="TreeGrafter"/>
</dbReference>
<dbReference type="GO" id="GO:0062026">
    <property type="term" value="P:negative regulation of SCF-dependent proteasomal ubiquitin-dependent catabolic process"/>
    <property type="evidence" value="ECO:0000318"/>
    <property type="project" value="GO_Central"/>
</dbReference>
<dbReference type="GO" id="GO:0070372">
    <property type="term" value="P:regulation of ERK1 and ERK2 cascade"/>
    <property type="evidence" value="ECO:0000318"/>
    <property type="project" value="GO_Central"/>
</dbReference>
<dbReference type="CDD" id="cd14522">
    <property type="entry name" value="DSP_STYX"/>
    <property type="match status" value="1"/>
</dbReference>
<dbReference type="FunFam" id="3.90.190.10:FF:000036">
    <property type="entry name" value="Serine/threonine/tyrosine-interacting protein a"/>
    <property type="match status" value="1"/>
</dbReference>
<dbReference type="Gene3D" id="3.90.190.10">
    <property type="entry name" value="Protein tyrosine phosphatase superfamily"/>
    <property type="match status" value="1"/>
</dbReference>
<dbReference type="InterPro" id="IPR000340">
    <property type="entry name" value="Dual-sp_phosphatase_cat-dom"/>
</dbReference>
<dbReference type="InterPro" id="IPR029021">
    <property type="entry name" value="Prot-tyrosine_phosphatase-like"/>
</dbReference>
<dbReference type="InterPro" id="IPR052449">
    <property type="entry name" value="STYX-Interacting_Phosphatase"/>
</dbReference>
<dbReference type="InterPro" id="IPR000387">
    <property type="entry name" value="Tyr_Pase_dom"/>
</dbReference>
<dbReference type="InterPro" id="IPR020422">
    <property type="entry name" value="TYR_PHOSPHATASE_DUAL_dom"/>
</dbReference>
<dbReference type="PANTHER" id="PTHR46588">
    <property type="entry name" value="SERINE/THREONINE/TYROSINE-INTERACTING PROTEIN"/>
    <property type="match status" value="1"/>
</dbReference>
<dbReference type="PANTHER" id="PTHR46588:SF1">
    <property type="entry name" value="SERINE_THREONINE_TYROSINE-INTERACTING PROTEIN"/>
    <property type="match status" value="1"/>
</dbReference>
<dbReference type="Pfam" id="PF00782">
    <property type="entry name" value="DSPc"/>
    <property type="match status" value="1"/>
</dbReference>
<dbReference type="SMART" id="SM00195">
    <property type="entry name" value="DSPc"/>
    <property type="match status" value="1"/>
</dbReference>
<dbReference type="SUPFAM" id="SSF52799">
    <property type="entry name" value="(Phosphotyrosine protein) phosphatases II"/>
    <property type="match status" value="1"/>
</dbReference>
<dbReference type="PROSITE" id="PS50056">
    <property type="entry name" value="TYR_PHOSPHATASE_2"/>
    <property type="match status" value="1"/>
</dbReference>
<dbReference type="PROSITE" id="PS50054">
    <property type="entry name" value="TYR_PHOSPHATASE_DUAL"/>
    <property type="match status" value="1"/>
</dbReference>
<feature type="chain" id="PRO_0000354672" description="Serine/threonine/tyrosine-interacting protein A">
    <location>
        <begin position="1"/>
        <end position="223"/>
    </location>
</feature>
<feature type="domain" description="Tyrosine-protein phosphatase" evidence="2">
    <location>
        <begin position="28"/>
        <end position="176"/>
    </location>
</feature>
<gene>
    <name type="primary">styx-a</name>
</gene>
<comment type="function">
    <text evidence="1">Catalytically inactive phosphatase.</text>
</comment>
<comment type="similarity">
    <text evidence="3">Belongs to the protein-tyrosine phosphatase family. Non-receptor class subfamily.</text>
</comment>
<comment type="caution">
    <text evidence="1">Contains a Gly residue instead of a conserved Cys residue at position 120 in the dsPTPase catalytic loop which renders it catalytically inactive as a phosphatase (By similarity). The binding pocket is however sufficiently preserved to bind phosphorylated substrates, and may protect them from phosphatases (By similarity).</text>
</comment>
<reference key="1">
    <citation type="submission" date="2005-06" db="EMBL/GenBank/DDBJ databases">
        <authorList>
            <consortium name="NIH - Xenopus Gene Collection (XGC) project"/>
        </authorList>
    </citation>
    <scope>NUCLEOTIDE SEQUENCE [LARGE SCALE MRNA]</scope>
    <source>
        <tissue>Egg</tissue>
    </source>
</reference>
<protein>
    <recommendedName>
        <fullName>Serine/threonine/tyrosine-interacting protein A</fullName>
    </recommendedName>
    <alternativeName>
        <fullName evidence="3">Inactive tyrosine-protein phosphatase STYX-A</fullName>
    </alternativeName>
</protein>
<keyword id="KW-1185">Reference proteome</keyword>
<name>STYXA_XENLA</name>
<sequence>MEDVKLQFPSLPLCKEEAEDWAYPMRREMQEILPGLFLGPYSAAMKSKLSVFQKCGITHVICIRQNIEANFIKPNFQQLFRYLVLDIADNPVENIIRFFPMSKEFIDGCLQTGGKVLIHGNAGISRSAALVIAYIMETFGIKYRDAFTYVQERRFCINPNAGFVHQLQEYEAIYLAKLTIKMMSPLQLGRPLCIQSGATGSLKRTLDDEDELGNMQVSAAHEG</sequence>